<accession>O10324</accession>
<name>IAP2_NPVOP</name>
<evidence type="ECO:0000255" key="1">
    <source>
        <dbReference type="PROSITE-ProRule" id="PRU00029"/>
    </source>
</evidence>
<organism>
    <name type="scientific">Orgyia pseudotsugata multicapsid polyhedrosis virus</name>
    <name type="common">OpMNPV</name>
    <dbReference type="NCBI Taxonomy" id="262177"/>
    <lineage>
        <taxon>Viruses</taxon>
        <taxon>Viruses incertae sedis</taxon>
        <taxon>Naldaviricetes</taxon>
        <taxon>Lefavirales</taxon>
        <taxon>Baculoviridae</taxon>
        <taxon>Alphabaculovirus</taxon>
        <taxon>Alphabaculovirus orpseudotsugatae</taxon>
    </lineage>
</organism>
<sequence length="236" mass="26397">MDLQRFNFLIMTTQGRVATMSFMSLDHAQKVDLAKTGLFFHNNLIKCIGCRATMDRVDARRVKRHTYSDTCVSAINALVANESLRKRSFASFKWARRQFGSRAREVDMLSRRGFYCVGKRLRCAGCKVVTTCVSVDGAQRAHAADCAFRRVFDVDLDACALANVVRVDLPPPRLEPRPSAPFDAAVSECKVCFVNEKSVCFLPCRHLVVCAECSPRCKRCCVCNGKIASRLSTIPQ</sequence>
<feature type="chain" id="PRO_0000122386" description="Probable apoptosis inhibitor 2">
    <location>
        <begin position="1"/>
        <end position="236"/>
    </location>
</feature>
<feature type="repeat" description="BIR">
    <location>
        <begin position="85"/>
        <end position="150"/>
    </location>
</feature>
<feature type="zinc finger region" description="RING-type">
    <location>
        <begin position="189"/>
        <end position="223"/>
    </location>
</feature>
<feature type="binding site" evidence="1">
    <location>
        <position position="123"/>
    </location>
    <ligand>
        <name>Zn(2+)</name>
        <dbReference type="ChEBI" id="CHEBI:29105"/>
    </ligand>
</feature>
<feature type="binding site" evidence="1">
    <location>
        <position position="126"/>
    </location>
    <ligand>
        <name>Zn(2+)</name>
        <dbReference type="ChEBI" id="CHEBI:29105"/>
    </ligand>
</feature>
<feature type="binding site" evidence="1">
    <location>
        <position position="142"/>
    </location>
    <ligand>
        <name>Zn(2+)</name>
        <dbReference type="ChEBI" id="CHEBI:29105"/>
    </ligand>
</feature>
<feature type="binding site" evidence="1">
    <location>
        <position position="146"/>
    </location>
    <ligand>
        <name>Zn(2+)</name>
        <dbReference type="ChEBI" id="CHEBI:29105"/>
    </ligand>
</feature>
<gene>
    <name type="primary">IAP2</name>
    <name type="ORF">ORF74</name>
</gene>
<proteinExistence type="predicted"/>
<reference key="1">
    <citation type="journal article" date="1997" name="Virology">
        <title>The sequence of the Orgyia pseudotsugata multinucleocapsid nuclear polyhedrosis virus genome.</title>
        <authorList>
            <person name="Ahrens C.H."/>
            <person name="Russell R.R."/>
            <person name="Funk C.J."/>
            <person name="Evans J."/>
            <person name="Harwood S."/>
            <person name="Rohrmann G.F."/>
        </authorList>
    </citation>
    <scope>NUCLEOTIDE SEQUENCE [LARGE SCALE GENOMIC DNA]</scope>
</reference>
<protein>
    <recommendedName>
        <fullName>Probable apoptosis inhibitor 2</fullName>
    </recommendedName>
    <alternativeName>
        <fullName>IAP-2</fullName>
    </alternativeName>
</protein>
<dbReference type="EMBL" id="U75930">
    <property type="protein sequence ID" value="AAC59073.1"/>
    <property type="molecule type" value="Genomic_DNA"/>
</dbReference>
<dbReference type="RefSeq" id="NP_046230.1">
    <property type="nucleotide sequence ID" value="NC_001875.2"/>
</dbReference>
<dbReference type="KEGG" id="vg:912069"/>
<dbReference type="OrthoDB" id="9255at10239"/>
<dbReference type="Proteomes" id="UP000009248">
    <property type="component" value="Genome"/>
</dbReference>
<dbReference type="GO" id="GO:0008270">
    <property type="term" value="F:zinc ion binding"/>
    <property type="evidence" value="ECO:0007669"/>
    <property type="project" value="UniProtKB-KW"/>
</dbReference>
<dbReference type="Gene3D" id="3.30.40.10">
    <property type="entry name" value="Zinc/RING finger domain, C3HC4 (zinc finger)"/>
    <property type="match status" value="1"/>
</dbReference>
<dbReference type="InterPro" id="IPR001370">
    <property type="entry name" value="BIR_rpt"/>
</dbReference>
<dbReference type="InterPro" id="IPR013083">
    <property type="entry name" value="Znf_RING/FYVE/PHD"/>
</dbReference>
<dbReference type="Pfam" id="PF13920">
    <property type="entry name" value="zf-C3HC4_3"/>
    <property type="match status" value="1"/>
</dbReference>
<dbReference type="SUPFAM" id="SSF57924">
    <property type="entry name" value="Inhibitor of apoptosis (IAP) repeat"/>
    <property type="match status" value="1"/>
</dbReference>
<dbReference type="PROSITE" id="PS50143">
    <property type="entry name" value="BIR_REPEAT_2"/>
    <property type="match status" value="1"/>
</dbReference>
<organismHost>
    <name type="scientific">Orgyia pseudotsugata</name>
    <name type="common">Douglas-fir tussock moth</name>
    <dbReference type="NCBI Taxonomy" id="33414"/>
</organismHost>
<keyword id="KW-0053">Apoptosis</keyword>
<keyword id="KW-0479">Metal-binding</keyword>
<keyword id="KW-1185">Reference proteome</keyword>
<keyword id="KW-0862">Zinc</keyword>
<keyword id="KW-0863">Zinc-finger</keyword>